<evidence type="ECO:0000255" key="1">
    <source>
        <dbReference type="HAMAP-Rule" id="MF_03123"/>
    </source>
</evidence>
<evidence type="ECO:0000255" key="2">
    <source>
        <dbReference type="PROSITE-ProRule" id="PRU01266"/>
    </source>
</evidence>
<evidence type="ECO:0000256" key="3">
    <source>
        <dbReference type="SAM" id="MobiDB-lite"/>
    </source>
</evidence>
<name>LIPA2_TRYCC</name>
<keyword id="KW-0004">4Fe-4S</keyword>
<keyword id="KW-0408">Iron</keyword>
<keyword id="KW-0411">Iron-sulfur</keyword>
<keyword id="KW-0479">Metal-binding</keyword>
<keyword id="KW-0496">Mitochondrion</keyword>
<keyword id="KW-1185">Reference proteome</keyword>
<keyword id="KW-0949">S-adenosyl-L-methionine</keyword>
<keyword id="KW-0808">Transferase</keyword>
<protein>
    <recommendedName>
        <fullName>Lipoyl synthase 2, mitochondrial</fullName>
        <ecNumber evidence="1">2.8.1.8</ecNumber>
    </recommendedName>
    <alternativeName>
        <fullName evidence="1">Lipoate synthase 2</fullName>
        <shortName evidence="1">LS 2</shortName>
        <shortName evidence="1">Lip-syn 2</shortName>
    </alternativeName>
    <alternativeName>
        <fullName evidence="1">Lipoic acid synthase 2</fullName>
    </alternativeName>
</protein>
<feature type="chain" id="PRO_0000398242" description="Lipoyl synthase 2, mitochondrial">
    <location>
        <begin position="1"/>
        <end position="431"/>
    </location>
</feature>
<feature type="domain" description="Radical SAM core" evidence="2">
    <location>
        <begin position="142"/>
        <end position="364"/>
    </location>
</feature>
<feature type="region of interest" description="Disordered" evidence="3">
    <location>
        <begin position="21"/>
        <end position="43"/>
    </location>
</feature>
<feature type="compositionally biased region" description="Basic and acidic residues" evidence="3">
    <location>
        <begin position="26"/>
        <end position="40"/>
    </location>
</feature>
<feature type="binding site" evidence="1">
    <location>
        <position position="127"/>
    </location>
    <ligand>
        <name>[4Fe-4S] cluster</name>
        <dbReference type="ChEBI" id="CHEBI:49883"/>
        <label>1</label>
    </ligand>
</feature>
<feature type="binding site" evidence="1">
    <location>
        <position position="132"/>
    </location>
    <ligand>
        <name>[4Fe-4S] cluster</name>
        <dbReference type="ChEBI" id="CHEBI:49883"/>
        <label>1</label>
    </ligand>
</feature>
<feature type="binding site" evidence="1">
    <location>
        <position position="138"/>
    </location>
    <ligand>
        <name>[4Fe-4S] cluster</name>
        <dbReference type="ChEBI" id="CHEBI:49883"/>
        <label>1</label>
    </ligand>
</feature>
<feature type="binding site" evidence="1">
    <location>
        <position position="159"/>
    </location>
    <ligand>
        <name>[4Fe-4S] cluster</name>
        <dbReference type="ChEBI" id="CHEBI:49883"/>
        <label>2</label>
        <note>4Fe-4S-S-AdoMet</note>
    </ligand>
</feature>
<feature type="binding site" evidence="1">
    <location>
        <position position="163"/>
    </location>
    <ligand>
        <name>[4Fe-4S] cluster</name>
        <dbReference type="ChEBI" id="CHEBI:49883"/>
        <label>2</label>
        <note>4Fe-4S-S-AdoMet</note>
    </ligand>
</feature>
<feature type="binding site" evidence="1">
    <location>
        <position position="166"/>
    </location>
    <ligand>
        <name>[4Fe-4S] cluster</name>
        <dbReference type="ChEBI" id="CHEBI:49883"/>
        <label>2</label>
        <note>4Fe-4S-S-AdoMet</note>
    </ligand>
</feature>
<feature type="binding site" evidence="1">
    <location>
        <position position="375"/>
    </location>
    <ligand>
        <name>[4Fe-4S] cluster</name>
        <dbReference type="ChEBI" id="CHEBI:49883"/>
        <label>1</label>
    </ligand>
</feature>
<organism>
    <name type="scientific">Trypanosoma cruzi (strain CL Brener)</name>
    <dbReference type="NCBI Taxonomy" id="353153"/>
    <lineage>
        <taxon>Eukaryota</taxon>
        <taxon>Discoba</taxon>
        <taxon>Euglenozoa</taxon>
        <taxon>Kinetoplastea</taxon>
        <taxon>Metakinetoplastina</taxon>
        <taxon>Trypanosomatida</taxon>
        <taxon>Trypanosomatidae</taxon>
        <taxon>Trypanosoma</taxon>
        <taxon>Schizotrypanum</taxon>
    </lineage>
</organism>
<proteinExistence type="inferred from homology"/>
<comment type="function">
    <text evidence="1">Catalyzes the radical-mediated insertion of two sulfur atoms into the C-6 and C-8 positions of the octanoyl moiety bound to the lipoyl domains of lipoate-dependent enzymes, thereby converting the octanoylated domains into lipoylated derivatives.</text>
</comment>
<comment type="catalytic activity">
    <reaction evidence="1">
        <text>[[Fe-S] cluster scaffold protein carrying a second [4Fe-4S](2+) cluster] + N(6)-octanoyl-L-lysyl-[protein] + 2 oxidized [2Fe-2S]-[ferredoxin] + 2 S-adenosyl-L-methionine + 4 H(+) = [[Fe-S] cluster scaffold protein] + N(6)-[(R)-dihydrolipoyl]-L-lysyl-[protein] + 4 Fe(3+) + 2 hydrogen sulfide + 2 5'-deoxyadenosine + 2 L-methionine + 2 reduced [2Fe-2S]-[ferredoxin]</text>
        <dbReference type="Rhea" id="RHEA:16585"/>
        <dbReference type="Rhea" id="RHEA-COMP:9928"/>
        <dbReference type="Rhea" id="RHEA-COMP:10000"/>
        <dbReference type="Rhea" id="RHEA-COMP:10001"/>
        <dbReference type="Rhea" id="RHEA-COMP:10475"/>
        <dbReference type="Rhea" id="RHEA-COMP:14568"/>
        <dbReference type="Rhea" id="RHEA-COMP:14569"/>
        <dbReference type="ChEBI" id="CHEBI:15378"/>
        <dbReference type="ChEBI" id="CHEBI:17319"/>
        <dbReference type="ChEBI" id="CHEBI:29034"/>
        <dbReference type="ChEBI" id="CHEBI:29919"/>
        <dbReference type="ChEBI" id="CHEBI:33722"/>
        <dbReference type="ChEBI" id="CHEBI:33737"/>
        <dbReference type="ChEBI" id="CHEBI:33738"/>
        <dbReference type="ChEBI" id="CHEBI:57844"/>
        <dbReference type="ChEBI" id="CHEBI:59789"/>
        <dbReference type="ChEBI" id="CHEBI:78809"/>
        <dbReference type="ChEBI" id="CHEBI:83100"/>
        <dbReference type="EC" id="2.8.1.8"/>
    </reaction>
</comment>
<comment type="cofactor">
    <cofactor evidence="1">
        <name>[4Fe-4S] cluster</name>
        <dbReference type="ChEBI" id="CHEBI:49883"/>
    </cofactor>
    <text evidence="1">Binds 2 [4Fe-4S] clusters per subunit. One cluster is coordinated with 3 cysteines and an exchangeable S-adenosyl-L-methionine.</text>
</comment>
<comment type="pathway">
    <text evidence="1">Protein modification; protein lipoylation via endogenous pathway; protein N(6)-(lipoyl)lysine from octanoyl-[acyl-carrier-protein]: step 2/2.</text>
</comment>
<comment type="subcellular location">
    <subcellularLocation>
        <location evidence="1">Mitochondrion</location>
    </subcellularLocation>
</comment>
<comment type="miscellaneous">
    <text evidence="1">This protein may be expected to contain an N-terminal transit peptide but none has been predicted.</text>
</comment>
<comment type="similarity">
    <text evidence="1">Belongs to the radical SAM superfamily. Lipoyl synthase family.</text>
</comment>
<gene>
    <name type="ORF">Tc00.1047053506211.10</name>
</gene>
<reference key="1">
    <citation type="journal article" date="2005" name="Science">
        <title>The genome sequence of Trypanosoma cruzi, etiologic agent of Chagas disease.</title>
        <authorList>
            <person name="El-Sayed N.M.A."/>
            <person name="Myler P.J."/>
            <person name="Bartholomeu D.C."/>
            <person name="Nilsson D."/>
            <person name="Aggarwal G."/>
            <person name="Tran A.-N."/>
            <person name="Ghedin E."/>
            <person name="Worthey E.A."/>
            <person name="Delcher A.L."/>
            <person name="Blandin G."/>
            <person name="Westenberger S.J."/>
            <person name="Caler E."/>
            <person name="Cerqueira G.C."/>
            <person name="Branche C."/>
            <person name="Haas B."/>
            <person name="Anupama A."/>
            <person name="Arner E."/>
            <person name="Aslund L."/>
            <person name="Attipoe P."/>
            <person name="Bontempi E."/>
            <person name="Bringaud F."/>
            <person name="Burton P."/>
            <person name="Cadag E."/>
            <person name="Campbell D.A."/>
            <person name="Carrington M."/>
            <person name="Crabtree J."/>
            <person name="Darban H."/>
            <person name="da Silveira J.F."/>
            <person name="de Jong P."/>
            <person name="Edwards K."/>
            <person name="Englund P.T."/>
            <person name="Fazelina G."/>
            <person name="Feldblyum T."/>
            <person name="Ferella M."/>
            <person name="Frasch A.C."/>
            <person name="Gull K."/>
            <person name="Horn D."/>
            <person name="Hou L."/>
            <person name="Huang Y."/>
            <person name="Kindlund E."/>
            <person name="Klingbeil M."/>
            <person name="Kluge S."/>
            <person name="Koo H."/>
            <person name="Lacerda D."/>
            <person name="Levin M.J."/>
            <person name="Lorenzi H."/>
            <person name="Louie T."/>
            <person name="Machado C.R."/>
            <person name="McCulloch R."/>
            <person name="McKenna A."/>
            <person name="Mizuno Y."/>
            <person name="Mottram J.C."/>
            <person name="Nelson S."/>
            <person name="Ochaya S."/>
            <person name="Osoegawa K."/>
            <person name="Pai G."/>
            <person name="Parsons M."/>
            <person name="Pentony M."/>
            <person name="Pettersson U."/>
            <person name="Pop M."/>
            <person name="Ramirez J.L."/>
            <person name="Rinta J."/>
            <person name="Robertson L."/>
            <person name="Salzberg S.L."/>
            <person name="Sanchez D.O."/>
            <person name="Seyler A."/>
            <person name="Sharma R."/>
            <person name="Shetty J."/>
            <person name="Simpson A.J."/>
            <person name="Sisk E."/>
            <person name="Tammi M.T."/>
            <person name="Tarleton R."/>
            <person name="Teixeira S."/>
            <person name="Van Aken S."/>
            <person name="Vogt C."/>
            <person name="Ward P.N."/>
            <person name="Wickstead B."/>
            <person name="Wortman J."/>
            <person name="White O."/>
            <person name="Fraser C.M."/>
            <person name="Stuart K.D."/>
            <person name="Andersson B."/>
        </authorList>
    </citation>
    <scope>NUCLEOTIDE SEQUENCE [LARGE SCALE GENOMIC DNA]</scope>
    <source>
        <strain>CL Brener</strain>
    </source>
</reference>
<sequence length="431" mass="47395">MFHRHLCKLCSKTPSAATLASPLGKLQEERGEGVAKDPKKDKQHRQIFLQKFRERLDSDTTGKNTLAGFIDLPEGISPTMAAVGPLKRGEEPLPPWLKMKVAKGVSRLPRFNRIRNSMREKRLATVCEEAKCPNIGECWGGDEEEGTATATIMVMGSHCTRGCRFCSVLTSRTPPPLDPDEPQKVANAVAEMGVDYIVMTMVDRDDLTDGGAAHVVRCVNTIKEKNPLLLLEALVGDFHGDLKLVETVALSPLSVYAHNIECVERITPNVRDRRASYRQSLKVLEHVNSFTKGAMLTKSSIMLGLGEKEEEVRQTLRDLRTAGVSAVTLGQYLQPARTRLKVSRYAHPKEFQMWEEEAMAMGFLYCASGPLVRSSYRAGEYYIKSLVKQRGAAATKSNTTTTTTTTTTTTTTNTASLAAATVTDSATLQGE</sequence>
<accession>Q4DYL7</accession>
<dbReference type="EC" id="2.8.1.8" evidence="1"/>
<dbReference type="EMBL" id="AAHK01000092">
    <property type="protein sequence ID" value="EAN97594.1"/>
    <property type="molecule type" value="Genomic_DNA"/>
</dbReference>
<dbReference type="RefSeq" id="XP_819445.1">
    <property type="nucleotide sequence ID" value="XM_814352.1"/>
</dbReference>
<dbReference type="SMR" id="Q4DYL7"/>
<dbReference type="FunCoup" id="Q4DYL7">
    <property type="interactions" value="334"/>
</dbReference>
<dbReference type="STRING" id="353153.Q4DYL7"/>
<dbReference type="PaxDb" id="353153-Q4DYL7"/>
<dbReference type="EnsemblProtists" id="EAN97594">
    <property type="protein sequence ID" value="EAN97594"/>
    <property type="gene ID" value="Tc00.1047053506211.10"/>
</dbReference>
<dbReference type="GeneID" id="3551901"/>
<dbReference type="KEGG" id="tcr:506211.10"/>
<dbReference type="eggNOG" id="KOG2672">
    <property type="taxonomic scope" value="Eukaryota"/>
</dbReference>
<dbReference type="InParanoid" id="Q4DYL7"/>
<dbReference type="OMA" id="PYCDIDF"/>
<dbReference type="UniPathway" id="UPA00538">
    <property type="reaction ID" value="UER00593"/>
</dbReference>
<dbReference type="Proteomes" id="UP000002296">
    <property type="component" value="Unassembled WGS sequence"/>
</dbReference>
<dbReference type="GO" id="GO:0005739">
    <property type="term" value="C:mitochondrion"/>
    <property type="evidence" value="ECO:0007669"/>
    <property type="project" value="UniProtKB-SubCell"/>
</dbReference>
<dbReference type="GO" id="GO:0051539">
    <property type="term" value="F:4 iron, 4 sulfur cluster binding"/>
    <property type="evidence" value="ECO:0007669"/>
    <property type="project" value="UniProtKB-UniRule"/>
</dbReference>
<dbReference type="GO" id="GO:0016992">
    <property type="term" value="F:lipoate synthase activity"/>
    <property type="evidence" value="ECO:0007669"/>
    <property type="project" value="UniProtKB-UniRule"/>
</dbReference>
<dbReference type="GO" id="GO:0046872">
    <property type="term" value="F:metal ion binding"/>
    <property type="evidence" value="ECO:0007669"/>
    <property type="project" value="UniProtKB-KW"/>
</dbReference>
<dbReference type="CDD" id="cd01335">
    <property type="entry name" value="Radical_SAM"/>
    <property type="match status" value="1"/>
</dbReference>
<dbReference type="FunFam" id="3.20.20.70:FF:000306">
    <property type="entry name" value="Lipoyl synthase, mitochondrial"/>
    <property type="match status" value="1"/>
</dbReference>
<dbReference type="Gene3D" id="3.20.20.70">
    <property type="entry name" value="Aldolase class I"/>
    <property type="match status" value="1"/>
</dbReference>
<dbReference type="HAMAP" id="MF_00206">
    <property type="entry name" value="Lipoyl_synth"/>
    <property type="match status" value="1"/>
</dbReference>
<dbReference type="InterPro" id="IPR013785">
    <property type="entry name" value="Aldolase_TIM"/>
</dbReference>
<dbReference type="InterPro" id="IPR006638">
    <property type="entry name" value="Elp3/MiaA/NifB-like_rSAM"/>
</dbReference>
<dbReference type="InterPro" id="IPR031691">
    <property type="entry name" value="LIAS_N"/>
</dbReference>
<dbReference type="InterPro" id="IPR003698">
    <property type="entry name" value="Lipoyl_synth"/>
</dbReference>
<dbReference type="InterPro" id="IPR007197">
    <property type="entry name" value="rSAM"/>
</dbReference>
<dbReference type="NCBIfam" id="TIGR00510">
    <property type="entry name" value="lipA"/>
    <property type="match status" value="1"/>
</dbReference>
<dbReference type="NCBIfam" id="NF004019">
    <property type="entry name" value="PRK05481.1"/>
    <property type="match status" value="1"/>
</dbReference>
<dbReference type="NCBIfam" id="NF009544">
    <property type="entry name" value="PRK12928.1"/>
    <property type="match status" value="1"/>
</dbReference>
<dbReference type="PANTHER" id="PTHR10949">
    <property type="entry name" value="LIPOYL SYNTHASE"/>
    <property type="match status" value="1"/>
</dbReference>
<dbReference type="PANTHER" id="PTHR10949:SF0">
    <property type="entry name" value="LIPOYL SYNTHASE, MITOCHONDRIAL"/>
    <property type="match status" value="1"/>
</dbReference>
<dbReference type="Pfam" id="PF16881">
    <property type="entry name" value="LIAS_N"/>
    <property type="match status" value="1"/>
</dbReference>
<dbReference type="Pfam" id="PF04055">
    <property type="entry name" value="Radical_SAM"/>
    <property type="match status" value="1"/>
</dbReference>
<dbReference type="SFLD" id="SFLDF00271">
    <property type="entry name" value="lipoyl_synthase"/>
    <property type="match status" value="1"/>
</dbReference>
<dbReference type="SFLD" id="SFLDG01058">
    <property type="entry name" value="lipoyl_synthase_like"/>
    <property type="match status" value="1"/>
</dbReference>
<dbReference type="SMART" id="SM00729">
    <property type="entry name" value="Elp3"/>
    <property type="match status" value="1"/>
</dbReference>
<dbReference type="SUPFAM" id="SSF102114">
    <property type="entry name" value="Radical SAM enzymes"/>
    <property type="match status" value="1"/>
</dbReference>
<dbReference type="PROSITE" id="PS51918">
    <property type="entry name" value="RADICAL_SAM"/>
    <property type="match status" value="1"/>
</dbReference>